<name>DXS_NEIMB</name>
<evidence type="ECO:0000255" key="1">
    <source>
        <dbReference type="HAMAP-Rule" id="MF_00315"/>
    </source>
</evidence>
<dbReference type="EC" id="2.2.1.7" evidence="1"/>
<dbReference type="EMBL" id="AE002098">
    <property type="protein sequence ID" value="AAF42201.1"/>
    <property type="molecule type" value="Genomic_DNA"/>
</dbReference>
<dbReference type="PIR" id="D81034">
    <property type="entry name" value="D81034"/>
</dbReference>
<dbReference type="RefSeq" id="NP_274863.1">
    <property type="nucleotide sequence ID" value="NC_003112.2"/>
</dbReference>
<dbReference type="RefSeq" id="WP_002225782.1">
    <property type="nucleotide sequence ID" value="NC_003112.2"/>
</dbReference>
<dbReference type="SMR" id="Q9JXV7"/>
<dbReference type="FunCoup" id="Q9JXV7">
    <property type="interactions" value="474"/>
</dbReference>
<dbReference type="STRING" id="122586.NMB1867"/>
<dbReference type="PaxDb" id="122586-NMB1867"/>
<dbReference type="KEGG" id="nme:NMB1867"/>
<dbReference type="PATRIC" id="fig|122586.8.peg.2387"/>
<dbReference type="HOGENOM" id="CLU_009227_1_4_4"/>
<dbReference type="InParanoid" id="Q9JXV7"/>
<dbReference type="OrthoDB" id="9803371at2"/>
<dbReference type="UniPathway" id="UPA00064">
    <property type="reaction ID" value="UER00091"/>
</dbReference>
<dbReference type="Proteomes" id="UP000000425">
    <property type="component" value="Chromosome"/>
</dbReference>
<dbReference type="GO" id="GO:0005829">
    <property type="term" value="C:cytosol"/>
    <property type="evidence" value="ECO:0000318"/>
    <property type="project" value="GO_Central"/>
</dbReference>
<dbReference type="GO" id="GO:0008661">
    <property type="term" value="F:1-deoxy-D-xylulose-5-phosphate synthase activity"/>
    <property type="evidence" value="ECO:0000318"/>
    <property type="project" value="GO_Central"/>
</dbReference>
<dbReference type="GO" id="GO:0000287">
    <property type="term" value="F:magnesium ion binding"/>
    <property type="evidence" value="ECO:0007669"/>
    <property type="project" value="UniProtKB-UniRule"/>
</dbReference>
<dbReference type="GO" id="GO:0030976">
    <property type="term" value="F:thiamine pyrophosphate binding"/>
    <property type="evidence" value="ECO:0007669"/>
    <property type="project" value="UniProtKB-UniRule"/>
</dbReference>
<dbReference type="GO" id="GO:0052865">
    <property type="term" value="P:1-deoxy-D-xylulose 5-phosphate biosynthetic process"/>
    <property type="evidence" value="ECO:0007669"/>
    <property type="project" value="UniProtKB-UniPathway"/>
</dbReference>
<dbReference type="GO" id="GO:0019288">
    <property type="term" value="P:isopentenyl diphosphate biosynthetic process, methylerythritol 4-phosphate pathway"/>
    <property type="evidence" value="ECO:0000318"/>
    <property type="project" value="GO_Central"/>
</dbReference>
<dbReference type="GO" id="GO:0016114">
    <property type="term" value="P:terpenoid biosynthetic process"/>
    <property type="evidence" value="ECO:0007669"/>
    <property type="project" value="UniProtKB-UniRule"/>
</dbReference>
<dbReference type="GO" id="GO:0009228">
    <property type="term" value="P:thiamine biosynthetic process"/>
    <property type="evidence" value="ECO:0007669"/>
    <property type="project" value="UniProtKB-UniRule"/>
</dbReference>
<dbReference type="CDD" id="cd02007">
    <property type="entry name" value="TPP_DXS"/>
    <property type="match status" value="1"/>
</dbReference>
<dbReference type="CDD" id="cd07033">
    <property type="entry name" value="TPP_PYR_DXS_TK_like"/>
    <property type="match status" value="1"/>
</dbReference>
<dbReference type="FunFam" id="3.40.50.920:FF:000002">
    <property type="entry name" value="1-deoxy-D-xylulose-5-phosphate synthase"/>
    <property type="match status" value="1"/>
</dbReference>
<dbReference type="FunFam" id="3.40.50.970:FF:000005">
    <property type="entry name" value="1-deoxy-D-xylulose-5-phosphate synthase"/>
    <property type="match status" value="1"/>
</dbReference>
<dbReference type="Gene3D" id="3.40.50.920">
    <property type="match status" value="1"/>
</dbReference>
<dbReference type="Gene3D" id="3.40.50.970">
    <property type="match status" value="2"/>
</dbReference>
<dbReference type="HAMAP" id="MF_00315">
    <property type="entry name" value="DXP_synth"/>
    <property type="match status" value="1"/>
</dbReference>
<dbReference type="InterPro" id="IPR005477">
    <property type="entry name" value="Dxylulose-5-P_synthase"/>
</dbReference>
<dbReference type="InterPro" id="IPR029061">
    <property type="entry name" value="THDP-binding"/>
</dbReference>
<dbReference type="InterPro" id="IPR009014">
    <property type="entry name" value="Transketo_C/PFOR_II"/>
</dbReference>
<dbReference type="InterPro" id="IPR005475">
    <property type="entry name" value="Transketolase-like_Pyr-bd"/>
</dbReference>
<dbReference type="InterPro" id="IPR020826">
    <property type="entry name" value="Transketolase_BS"/>
</dbReference>
<dbReference type="InterPro" id="IPR033248">
    <property type="entry name" value="Transketolase_C"/>
</dbReference>
<dbReference type="InterPro" id="IPR049557">
    <property type="entry name" value="Transketolase_CS"/>
</dbReference>
<dbReference type="NCBIfam" id="TIGR00204">
    <property type="entry name" value="dxs"/>
    <property type="match status" value="1"/>
</dbReference>
<dbReference type="NCBIfam" id="NF003933">
    <property type="entry name" value="PRK05444.2-2"/>
    <property type="match status" value="1"/>
</dbReference>
<dbReference type="PANTHER" id="PTHR43322">
    <property type="entry name" value="1-D-DEOXYXYLULOSE 5-PHOSPHATE SYNTHASE-RELATED"/>
    <property type="match status" value="1"/>
</dbReference>
<dbReference type="PANTHER" id="PTHR43322:SF5">
    <property type="entry name" value="1-DEOXY-D-XYLULOSE-5-PHOSPHATE SYNTHASE, CHLOROPLASTIC"/>
    <property type="match status" value="1"/>
</dbReference>
<dbReference type="Pfam" id="PF13292">
    <property type="entry name" value="DXP_synthase_N"/>
    <property type="match status" value="1"/>
</dbReference>
<dbReference type="Pfam" id="PF02779">
    <property type="entry name" value="Transket_pyr"/>
    <property type="match status" value="1"/>
</dbReference>
<dbReference type="Pfam" id="PF02780">
    <property type="entry name" value="Transketolase_C"/>
    <property type="match status" value="1"/>
</dbReference>
<dbReference type="SMART" id="SM00861">
    <property type="entry name" value="Transket_pyr"/>
    <property type="match status" value="1"/>
</dbReference>
<dbReference type="SUPFAM" id="SSF52518">
    <property type="entry name" value="Thiamin diphosphate-binding fold (THDP-binding)"/>
    <property type="match status" value="2"/>
</dbReference>
<dbReference type="SUPFAM" id="SSF52922">
    <property type="entry name" value="TK C-terminal domain-like"/>
    <property type="match status" value="1"/>
</dbReference>
<dbReference type="PROSITE" id="PS00801">
    <property type="entry name" value="TRANSKETOLASE_1"/>
    <property type="match status" value="1"/>
</dbReference>
<dbReference type="PROSITE" id="PS00802">
    <property type="entry name" value="TRANSKETOLASE_2"/>
    <property type="match status" value="1"/>
</dbReference>
<protein>
    <recommendedName>
        <fullName evidence="1">1-deoxy-D-xylulose-5-phosphate synthase</fullName>
        <ecNumber evidence="1">2.2.1.7</ecNumber>
    </recommendedName>
    <alternativeName>
        <fullName evidence="1">1-deoxyxylulose-5-phosphate synthase</fullName>
        <shortName evidence="1">DXP synthase</shortName>
        <shortName evidence="1">DXPS</shortName>
    </alternativeName>
</protein>
<proteinExistence type="inferred from homology"/>
<feature type="chain" id="PRO_0000189134" description="1-deoxy-D-xylulose-5-phosphate synthase">
    <location>
        <begin position="1"/>
        <end position="637"/>
    </location>
</feature>
<feature type="binding site" evidence="1">
    <location>
        <position position="76"/>
    </location>
    <ligand>
        <name>thiamine diphosphate</name>
        <dbReference type="ChEBI" id="CHEBI:58937"/>
    </ligand>
</feature>
<feature type="binding site" evidence="1">
    <location>
        <begin position="117"/>
        <end position="119"/>
    </location>
    <ligand>
        <name>thiamine diphosphate</name>
        <dbReference type="ChEBI" id="CHEBI:58937"/>
    </ligand>
</feature>
<feature type="binding site" evidence="1">
    <location>
        <position position="148"/>
    </location>
    <ligand>
        <name>Mg(2+)</name>
        <dbReference type="ChEBI" id="CHEBI:18420"/>
    </ligand>
</feature>
<feature type="binding site" evidence="1">
    <location>
        <begin position="149"/>
        <end position="150"/>
    </location>
    <ligand>
        <name>thiamine diphosphate</name>
        <dbReference type="ChEBI" id="CHEBI:58937"/>
    </ligand>
</feature>
<feature type="binding site" evidence="1">
    <location>
        <position position="177"/>
    </location>
    <ligand>
        <name>Mg(2+)</name>
        <dbReference type="ChEBI" id="CHEBI:18420"/>
    </ligand>
</feature>
<feature type="binding site" evidence="1">
    <location>
        <position position="177"/>
    </location>
    <ligand>
        <name>thiamine diphosphate</name>
        <dbReference type="ChEBI" id="CHEBI:58937"/>
    </ligand>
</feature>
<feature type="binding site" evidence="1">
    <location>
        <position position="294"/>
    </location>
    <ligand>
        <name>thiamine diphosphate</name>
        <dbReference type="ChEBI" id="CHEBI:58937"/>
    </ligand>
</feature>
<feature type="binding site" evidence="1">
    <location>
        <position position="381"/>
    </location>
    <ligand>
        <name>thiamine diphosphate</name>
        <dbReference type="ChEBI" id="CHEBI:58937"/>
    </ligand>
</feature>
<accession>Q9JXV7</accession>
<sequence length="637" mass="68750">MNPSPLLDLIDSPQDLRRLDKKQLPRLAGELRTFLLESVGQTGGHFASNLGAVELTIALHYVYDTPEDKLVWDVGHQSYPHKILTGRKNQMHTMRQYGGLAGFPKRCESEYDAFGVGHSSTSIGAALGMAAADKLLGSDRRSVAIIGDGAMTAGQAFEALNCAGDMDVDLLVVLNDNEMSISPNVGALPKYLASNVVRDMHGLLSTVKAQTGKVLDKIPGAMEFAQKVEHKIKTLAEEAEHAKQSLSLFENFGFRYTGPVDGHNVENLVDVLKDLRSRKGPQLLHVITKKGNGYKLAENDPVKYHAVANLPKESAAQMPSEKEPKPAAKPTYTQVFGKWLCDRAAADSRLVAITPAMREGSGLVEFEQRFPDRYFDVGIAEQHAVTFAGGLACEGMKPVVAIYSTFLQRAYDQLVHDIALQNLPVLFAVDRAGIVGADGPTHAGLYDLSFLRCVPNMIVAAPSDENECRLLLSTCYQADAPAAVRYPRGTGTGAPVSDGMETVEIGKGIIRREGEKTAFIAFGSMVAPALAVAEKLNATVADMRFVKPIDEELIVRLARSHDRIVTLEENAEQGGAGGAVLEVLAKHGICKPVLLLGVADTVTGHGDPKKLLDDLGLSAEAVERRVRAWLSDRDAAN</sequence>
<reference key="1">
    <citation type="journal article" date="2000" name="Science">
        <title>Complete genome sequence of Neisseria meningitidis serogroup B strain MC58.</title>
        <authorList>
            <person name="Tettelin H."/>
            <person name="Saunders N.J."/>
            <person name="Heidelberg J.F."/>
            <person name="Jeffries A.C."/>
            <person name="Nelson K.E."/>
            <person name="Eisen J.A."/>
            <person name="Ketchum K.A."/>
            <person name="Hood D.W."/>
            <person name="Peden J.F."/>
            <person name="Dodson R.J."/>
            <person name="Nelson W.C."/>
            <person name="Gwinn M.L."/>
            <person name="DeBoy R.T."/>
            <person name="Peterson J.D."/>
            <person name="Hickey E.K."/>
            <person name="Haft D.H."/>
            <person name="Salzberg S.L."/>
            <person name="White O."/>
            <person name="Fleischmann R.D."/>
            <person name="Dougherty B.A."/>
            <person name="Mason T.M."/>
            <person name="Ciecko A."/>
            <person name="Parksey D.S."/>
            <person name="Blair E."/>
            <person name="Cittone H."/>
            <person name="Clark E.B."/>
            <person name="Cotton M.D."/>
            <person name="Utterback T.R."/>
            <person name="Khouri H.M."/>
            <person name="Qin H."/>
            <person name="Vamathevan J.J."/>
            <person name="Gill J."/>
            <person name="Scarlato V."/>
            <person name="Masignani V."/>
            <person name="Pizza M."/>
            <person name="Grandi G."/>
            <person name="Sun L."/>
            <person name="Smith H.O."/>
            <person name="Fraser C.M."/>
            <person name="Moxon E.R."/>
            <person name="Rappuoli R."/>
            <person name="Venter J.C."/>
        </authorList>
    </citation>
    <scope>NUCLEOTIDE SEQUENCE [LARGE SCALE GENOMIC DNA]</scope>
    <source>
        <strain>ATCC BAA-335 / MC58</strain>
    </source>
</reference>
<gene>
    <name evidence="1" type="primary">dxs</name>
    <name type="ordered locus">NMB1867</name>
</gene>
<organism>
    <name type="scientific">Neisseria meningitidis serogroup B (strain ATCC BAA-335 / MC58)</name>
    <dbReference type="NCBI Taxonomy" id="122586"/>
    <lineage>
        <taxon>Bacteria</taxon>
        <taxon>Pseudomonadati</taxon>
        <taxon>Pseudomonadota</taxon>
        <taxon>Betaproteobacteria</taxon>
        <taxon>Neisseriales</taxon>
        <taxon>Neisseriaceae</taxon>
        <taxon>Neisseria</taxon>
    </lineage>
</organism>
<comment type="function">
    <text evidence="1">Catalyzes the acyloin condensation reaction between C atoms 2 and 3 of pyruvate and glyceraldehyde 3-phosphate to yield 1-deoxy-D-xylulose-5-phosphate (DXP).</text>
</comment>
<comment type="catalytic activity">
    <reaction evidence="1">
        <text>D-glyceraldehyde 3-phosphate + pyruvate + H(+) = 1-deoxy-D-xylulose 5-phosphate + CO2</text>
        <dbReference type="Rhea" id="RHEA:12605"/>
        <dbReference type="ChEBI" id="CHEBI:15361"/>
        <dbReference type="ChEBI" id="CHEBI:15378"/>
        <dbReference type="ChEBI" id="CHEBI:16526"/>
        <dbReference type="ChEBI" id="CHEBI:57792"/>
        <dbReference type="ChEBI" id="CHEBI:59776"/>
        <dbReference type="EC" id="2.2.1.7"/>
    </reaction>
</comment>
<comment type="cofactor">
    <cofactor evidence="1">
        <name>Mg(2+)</name>
        <dbReference type="ChEBI" id="CHEBI:18420"/>
    </cofactor>
    <text evidence="1">Binds 1 Mg(2+) ion per subunit.</text>
</comment>
<comment type="cofactor">
    <cofactor evidence="1">
        <name>thiamine diphosphate</name>
        <dbReference type="ChEBI" id="CHEBI:58937"/>
    </cofactor>
    <text evidence="1">Binds 1 thiamine pyrophosphate per subunit.</text>
</comment>
<comment type="pathway">
    <text evidence="1">Metabolic intermediate biosynthesis; 1-deoxy-D-xylulose 5-phosphate biosynthesis; 1-deoxy-D-xylulose 5-phosphate from D-glyceraldehyde 3-phosphate and pyruvate: step 1/1.</text>
</comment>
<comment type="subunit">
    <text evidence="1">Homodimer.</text>
</comment>
<comment type="similarity">
    <text evidence="1">Belongs to the transketolase family. DXPS subfamily.</text>
</comment>
<keyword id="KW-0414">Isoprene biosynthesis</keyword>
<keyword id="KW-0460">Magnesium</keyword>
<keyword id="KW-0479">Metal-binding</keyword>
<keyword id="KW-1185">Reference proteome</keyword>
<keyword id="KW-0784">Thiamine biosynthesis</keyword>
<keyword id="KW-0786">Thiamine pyrophosphate</keyword>
<keyword id="KW-0808">Transferase</keyword>